<protein>
    <recommendedName>
        <fullName evidence="1">Aspartate/glutamate leucyltransferase</fullName>
        <ecNumber evidence="1">2.3.2.29</ecNumber>
    </recommendedName>
</protein>
<comment type="function">
    <text evidence="1">Functions in the N-end rule pathway of protein degradation where it conjugates Leu from its aminoacyl-tRNA to the N-termini of proteins containing an N-terminal aspartate or glutamate.</text>
</comment>
<comment type="catalytic activity">
    <reaction evidence="1">
        <text>N-terminal L-glutamyl-[protein] + L-leucyl-tRNA(Leu) = N-terminal L-leucyl-L-glutamyl-[protein] + tRNA(Leu) + H(+)</text>
        <dbReference type="Rhea" id="RHEA:50412"/>
        <dbReference type="Rhea" id="RHEA-COMP:9613"/>
        <dbReference type="Rhea" id="RHEA-COMP:9622"/>
        <dbReference type="Rhea" id="RHEA-COMP:12664"/>
        <dbReference type="Rhea" id="RHEA-COMP:12668"/>
        <dbReference type="ChEBI" id="CHEBI:15378"/>
        <dbReference type="ChEBI" id="CHEBI:64721"/>
        <dbReference type="ChEBI" id="CHEBI:78442"/>
        <dbReference type="ChEBI" id="CHEBI:78494"/>
        <dbReference type="ChEBI" id="CHEBI:133041"/>
        <dbReference type="EC" id="2.3.2.29"/>
    </reaction>
</comment>
<comment type="catalytic activity">
    <reaction evidence="1">
        <text>N-terminal L-aspartyl-[protein] + L-leucyl-tRNA(Leu) = N-terminal L-leucyl-L-aspartyl-[protein] + tRNA(Leu) + H(+)</text>
        <dbReference type="Rhea" id="RHEA:50420"/>
        <dbReference type="Rhea" id="RHEA-COMP:9613"/>
        <dbReference type="Rhea" id="RHEA-COMP:9622"/>
        <dbReference type="Rhea" id="RHEA-COMP:12669"/>
        <dbReference type="Rhea" id="RHEA-COMP:12674"/>
        <dbReference type="ChEBI" id="CHEBI:15378"/>
        <dbReference type="ChEBI" id="CHEBI:64720"/>
        <dbReference type="ChEBI" id="CHEBI:78442"/>
        <dbReference type="ChEBI" id="CHEBI:78494"/>
        <dbReference type="ChEBI" id="CHEBI:133042"/>
        <dbReference type="EC" id="2.3.2.29"/>
    </reaction>
</comment>
<comment type="subcellular location">
    <subcellularLocation>
        <location evidence="1">Cytoplasm</location>
    </subcellularLocation>
</comment>
<comment type="similarity">
    <text evidence="1">Belongs to the R-transferase family. Bpt subfamily.</text>
</comment>
<gene>
    <name evidence="1" type="primary">bpt</name>
    <name type="ordered locus">RL1614</name>
</gene>
<feature type="chain" id="PRO_0000263208" description="Aspartate/glutamate leucyltransferase">
    <location>
        <begin position="1"/>
        <end position="258"/>
    </location>
</feature>
<organism>
    <name type="scientific">Rhizobium johnstonii (strain DSM 114642 / LMG 32736 / 3841)</name>
    <name type="common">Rhizobium leguminosarum bv. viciae</name>
    <dbReference type="NCBI Taxonomy" id="216596"/>
    <lineage>
        <taxon>Bacteria</taxon>
        <taxon>Pseudomonadati</taxon>
        <taxon>Pseudomonadota</taxon>
        <taxon>Alphaproteobacteria</taxon>
        <taxon>Hyphomicrobiales</taxon>
        <taxon>Rhizobiaceae</taxon>
        <taxon>Rhizobium/Agrobacterium group</taxon>
        <taxon>Rhizobium</taxon>
        <taxon>Rhizobium johnstonii</taxon>
    </lineage>
</organism>
<accession>Q1MIV1</accession>
<sequence length="258" mass="29544">MNTQTTPSPQFYLTAPAACPYLPHEMERKVFTHLVGPRAAEMNDILTQGGFRRSQNIAYRPACESCRACVSVRILAQEFEPTKSMKRVLAANSDVIATEFAAQPSSEQYSLFRRYLDFRHQQGGMSDMTVLDYAIMVEDTHVNTRIIEYRRREEGSGLEQRPKGELLAAALTDTMSDGLSMVYSYFNPALEQRSLGTFMILDHVRRTKALGLPHVYLGYWVQGSRKMDYKTRFQPQEHLTPRGWERFDPSSMPESTHD</sequence>
<evidence type="ECO:0000255" key="1">
    <source>
        <dbReference type="HAMAP-Rule" id="MF_00689"/>
    </source>
</evidence>
<dbReference type="EC" id="2.3.2.29" evidence="1"/>
<dbReference type="EMBL" id="AM236080">
    <property type="protein sequence ID" value="CAK07109.1"/>
    <property type="molecule type" value="Genomic_DNA"/>
</dbReference>
<dbReference type="RefSeq" id="WP_003547148.1">
    <property type="nucleotide sequence ID" value="NC_008380.1"/>
</dbReference>
<dbReference type="SMR" id="Q1MIV1"/>
<dbReference type="EnsemblBacteria" id="CAK07109">
    <property type="protein sequence ID" value="CAK07109"/>
    <property type="gene ID" value="RL1614"/>
</dbReference>
<dbReference type="KEGG" id="rle:RL1614"/>
<dbReference type="eggNOG" id="COG2935">
    <property type="taxonomic scope" value="Bacteria"/>
</dbReference>
<dbReference type="HOGENOM" id="CLU_077607_1_0_5"/>
<dbReference type="Proteomes" id="UP000006575">
    <property type="component" value="Chromosome"/>
</dbReference>
<dbReference type="GO" id="GO:0005737">
    <property type="term" value="C:cytoplasm"/>
    <property type="evidence" value="ECO:0007669"/>
    <property type="project" value="UniProtKB-SubCell"/>
</dbReference>
<dbReference type="GO" id="GO:0004057">
    <property type="term" value="F:arginyl-tRNA--protein transferase activity"/>
    <property type="evidence" value="ECO:0007669"/>
    <property type="project" value="InterPro"/>
</dbReference>
<dbReference type="GO" id="GO:0008914">
    <property type="term" value="F:leucyl-tRNA--protein transferase activity"/>
    <property type="evidence" value="ECO:0007669"/>
    <property type="project" value="UniProtKB-UniRule"/>
</dbReference>
<dbReference type="GO" id="GO:0071596">
    <property type="term" value="P:ubiquitin-dependent protein catabolic process via the N-end rule pathway"/>
    <property type="evidence" value="ECO:0007669"/>
    <property type="project" value="InterPro"/>
</dbReference>
<dbReference type="HAMAP" id="MF_00689">
    <property type="entry name" value="Bpt"/>
    <property type="match status" value="1"/>
</dbReference>
<dbReference type="InterPro" id="IPR016181">
    <property type="entry name" value="Acyl_CoA_acyltransferase"/>
</dbReference>
<dbReference type="InterPro" id="IPR017138">
    <property type="entry name" value="Asp_Glu_LeuTrfase"/>
</dbReference>
<dbReference type="InterPro" id="IPR030700">
    <property type="entry name" value="N-end_Aminoacyl_Trfase"/>
</dbReference>
<dbReference type="InterPro" id="IPR007472">
    <property type="entry name" value="N-end_Aminoacyl_Trfase_C"/>
</dbReference>
<dbReference type="InterPro" id="IPR007471">
    <property type="entry name" value="N-end_Aminoacyl_Trfase_N"/>
</dbReference>
<dbReference type="NCBIfam" id="NF002342">
    <property type="entry name" value="PRK01305.1-3"/>
    <property type="match status" value="1"/>
</dbReference>
<dbReference type="NCBIfam" id="NF002343">
    <property type="entry name" value="PRK01305.1-4"/>
    <property type="match status" value="1"/>
</dbReference>
<dbReference type="NCBIfam" id="NF002346">
    <property type="entry name" value="PRK01305.2-3"/>
    <property type="match status" value="1"/>
</dbReference>
<dbReference type="PANTHER" id="PTHR21367">
    <property type="entry name" value="ARGININE-TRNA-PROTEIN TRANSFERASE 1"/>
    <property type="match status" value="1"/>
</dbReference>
<dbReference type="PANTHER" id="PTHR21367:SF1">
    <property type="entry name" value="ARGINYL-TRNA--PROTEIN TRANSFERASE 1"/>
    <property type="match status" value="1"/>
</dbReference>
<dbReference type="Pfam" id="PF04377">
    <property type="entry name" value="ATE_C"/>
    <property type="match status" value="1"/>
</dbReference>
<dbReference type="Pfam" id="PF04376">
    <property type="entry name" value="ATE_N"/>
    <property type="match status" value="1"/>
</dbReference>
<dbReference type="PIRSF" id="PIRSF037208">
    <property type="entry name" value="ATE_pro_prd"/>
    <property type="match status" value="1"/>
</dbReference>
<dbReference type="SUPFAM" id="SSF55729">
    <property type="entry name" value="Acyl-CoA N-acyltransferases (Nat)"/>
    <property type="match status" value="1"/>
</dbReference>
<proteinExistence type="inferred from homology"/>
<reference key="1">
    <citation type="journal article" date="2006" name="Genome Biol.">
        <title>The genome of Rhizobium leguminosarum has recognizable core and accessory components.</title>
        <authorList>
            <person name="Young J.P.W."/>
            <person name="Crossman L.C."/>
            <person name="Johnston A.W.B."/>
            <person name="Thomson N.R."/>
            <person name="Ghazoui Z.F."/>
            <person name="Hull K.H."/>
            <person name="Wexler M."/>
            <person name="Curson A.R.J."/>
            <person name="Todd J.D."/>
            <person name="Poole P.S."/>
            <person name="Mauchline T.H."/>
            <person name="East A.K."/>
            <person name="Quail M.A."/>
            <person name="Churcher C."/>
            <person name="Arrowsmith C."/>
            <person name="Cherevach I."/>
            <person name="Chillingworth T."/>
            <person name="Clarke K."/>
            <person name="Cronin A."/>
            <person name="Davis P."/>
            <person name="Fraser A."/>
            <person name="Hance Z."/>
            <person name="Hauser H."/>
            <person name="Jagels K."/>
            <person name="Moule S."/>
            <person name="Mungall K."/>
            <person name="Norbertczak H."/>
            <person name="Rabbinowitsch E."/>
            <person name="Sanders M."/>
            <person name="Simmonds M."/>
            <person name="Whitehead S."/>
            <person name="Parkhill J."/>
        </authorList>
    </citation>
    <scope>NUCLEOTIDE SEQUENCE [LARGE SCALE GENOMIC DNA]</scope>
    <source>
        <strain>DSM 114642 / LMG 32736 / 3841</strain>
    </source>
</reference>
<name>BPT_RHIJ3</name>
<keyword id="KW-0012">Acyltransferase</keyword>
<keyword id="KW-0963">Cytoplasm</keyword>
<keyword id="KW-0808">Transferase</keyword>